<feature type="signal peptide" evidence="1">
    <location>
        <begin position="1"/>
        <end position="23"/>
    </location>
</feature>
<feature type="chain" id="PRO_0000034656" description="Tol-Pal system protein TolB" evidence="1">
    <location>
        <begin position="24"/>
        <end position="427"/>
    </location>
</feature>
<feature type="sequence variant" description="In strain: 1479.">
    <original>R</original>
    <variation>H</variation>
    <location>
        <position position="6"/>
    </location>
</feature>
<feature type="sequence variant" description="In strain: 1479.">
    <original>V</original>
    <variation>I</variation>
    <location>
        <position position="14"/>
    </location>
</feature>
<feature type="sequence variant" description="In strain: 1479.">
    <original>VGS</original>
    <variation>ITH</variation>
    <location>
        <begin position="17"/>
        <end position="19"/>
    </location>
</feature>
<feature type="sequence variant" description="In strain: 1479.">
    <original>A</original>
    <variation>V</variation>
    <location>
        <position position="21"/>
    </location>
</feature>
<feature type="sequence variant" description="In strain: 1479.">
    <original>R</original>
    <variation>H</variation>
    <location>
        <position position="79"/>
    </location>
</feature>
<feature type="sequence variant" description="In strain: 1479.">
    <original>T</original>
    <variation>A</variation>
    <location>
        <position position="129"/>
    </location>
</feature>
<feature type="sequence variant" description="In strain: 1479.">
    <original>A</original>
    <variation>G</variation>
    <location>
        <position position="160"/>
    </location>
</feature>
<feature type="sequence variant" description="In strain: 1479.">
    <original>A</original>
    <variation>T</variation>
    <location>
        <position position="237"/>
    </location>
</feature>
<feature type="sequence variant" description="In strain: 1479.">
    <original>S</original>
    <variation>N</variation>
    <location>
        <position position="322"/>
    </location>
</feature>
<feature type="sequence variant" description="In strain: 1479.">
    <original>A</original>
    <variation>V</variation>
    <location>
        <position position="326"/>
    </location>
</feature>
<feature type="sequence variant" description="In strain: 1479.">
    <original>A</original>
    <variation>S</variation>
    <location>
        <position position="328"/>
    </location>
</feature>
<proteinExistence type="inferred from homology"/>
<name>TOLB_HAEIN</name>
<comment type="function">
    <text evidence="1">Part of the Tol-Pal system, which plays a role in outer membrane invagination during cell division and is important for maintaining outer membrane integrity.</text>
</comment>
<comment type="subunit">
    <text evidence="1">The Tol-Pal system is composed of five core proteins: the inner membrane proteins TolA, TolQ and TolR, the periplasmic protein TolB and the outer membrane protein Pal. They form a network linking the inner and outer membranes and the peptidoglycan layer.</text>
</comment>
<comment type="subcellular location">
    <subcellularLocation>
        <location evidence="1 2">Periplasm</location>
    </subcellularLocation>
</comment>
<comment type="similarity">
    <text evidence="1 2">Belongs to the TolB family.</text>
</comment>
<accession>P44677</accession>
<accession>P94811</accession>
<gene>
    <name evidence="1" type="primary">tolB</name>
    <name type="ordered locus">HI_0382</name>
</gene>
<protein>
    <recommendedName>
        <fullName evidence="1">Tol-Pal system protein TolB</fullName>
    </recommendedName>
</protein>
<sequence>MKLLKRLVSVFAIVLAVGSNAFAGDEVRIVIDEGVDGARPIAVVPFVGSAPEDISKIVADDLRNSGKFNPIAVSQMPQRPTSAAEVNPEAWSNIGIDAIVIGQVVPSGNGYSITYQLIDTVGASGTPGTVLMQNSYTVTNKWLRYGAHTVSDEVFEKLTAIRGAFRTRIAYVVQKNGGSQPYEVRVADYDGYNQFIVNRSAQPIMSPAWSPDGQRLAYVSFENKKSQLVVQDLNSGARKVVASFQGHNGAPAFSPDGSRLAFASSRDGVLNIYVMGANGGTPTQLTSGAGNNTEPAWSPDGNSILFTSDRSGSPQVYRMDASGGSATAVGGRGSAQISADGKTLVMINGNNNVVKQDLTTGVSEVLSTSFLGESPSLSPNGIMIIYSSTQGLGKVLQLVSADGRFKASLPGSDGQVKFPAWSPYLTK</sequence>
<dbReference type="EMBL" id="L42023">
    <property type="protein sequence ID" value="AAC22040.1"/>
    <property type="molecule type" value="Genomic_DNA"/>
</dbReference>
<dbReference type="EMBL" id="U32470">
    <property type="protein sequence ID" value="AAC44597.1"/>
    <property type="molecule type" value="Genomic_DNA"/>
</dbReference>
<dbReference type="PIR" id="F64064">
    <property type="entry name" value="F64064"/>
</dbReference>
<dbReference type="RefSeq" id="NP_438543.1">
    <property type="nucleotide sequence ID" value="NC_000907.1"/>
</dbReference>
<dbReference type="SMR" id="P44677"/>
<dbReference type="STRING" id="71421.HI_0382"/>
<dbReference type="EnsemblBacteria" id="AAC22040">
    <property type="protein sequence ID" value="AAC22040"/>
    <property type="gene ID" value="HI_0382"/>
</dbReference>
<dbReference type="KEGG" id="hin:HI_0382"/>
<dbReference type="PATRIC" id="fig|71421.8.peg.400"/>
<dbReference type="eggNOG" id="COG0823">
    <property type="taxonomic scope" value="Bacteria"/>
</dbReference>
<dbReference type="HOGENOM" id="CLU_047123_0_0_6"/>
<dbReference type="OrthoDB" id="9802240at2"/>
<dbReference type="PhylomeDB" id="P44677"/>
<dbReference type="BioCyc" id="HINF71421:G1GJ1-397-MONOMER"/>
<dbReference type="Proteomes" id="UP000000579">
    <property type="component" value="Chromosome"/>
</dbReference>
<dbReference type="GO" id="GO:0042597">
    <property type="term" value="C:periplasmic space"/>
    <property type="evidence" value="ECO:0007669"/>
    <property type="project" value="UniProtKB-SubCell"/>
</dbReference>
<dbReference type="GO" id="GO:0051301">
    <property type="term" value="P:cell division"/>
    <property type="evidence" value="ECO:0007669"/>
    <property type="project" value="UniProtKB-UniRule"/>
</dbReference>
<dbReference type="GO" id="GO:0017038">
    <property type="term" value="P:protein import"/>
    <property type="evidence" value="ECO:0007669"/>
    <property type="project" value="InterPro"/>
</dbReference>
<dbReference type="Gene3D" id="2.120.10.30">
    <property type="entry name" value="TolB, C-terminal domain"/>
    <property type="match status" value="1"/>
</dbReference>
<dbReference type="Gene3D" id="3.40.50.10070">
    <property type="entry name" value="TolB, N-terminal domain"/>
    <property type="match status" value="1"/>
</dbReference>
<dbReference type="HAMAP" id="MF_00671">
    <property type="entry name" value="TolB"/>
    <property type="match status" value="1"/>
</dbReference>
<dbReference type="InterPro" id="IPR011042">
    <property type="entry name" value="6-blade_b-propeller_TolB-like"/>
</dbReference>
<dbReference type="InterPro" id="IPR011659">
    <property type="entry name" value="PD40"/>
</dbReference>
<dbReference type="InterPro" id="IPR014167">
    <property type="entry name" value="Tol-Pal_TolB"/>
</dbReference>
<dbReference type="InterPro" id="IPR007195">
    <property type="entry name" value="TolB_N"/>
</dbReference>
<dbReference type="NCBIfam" id="TIGR02800">
    <property type="entry name" value="propeller_TolB"/>
    <property type="match status" value="1"/>
</dbReference>
<dbReference type="PANTHER" id="PTHR36842:SF1">
    <property type="entry name" value="PROTEIN TOLB"/>
    <property type="match status" value="1"/>
</dbReference>
<dbReference type="PANTHER" id="PTHR36842">
    <property type="entry name" value="PROTEIN TOLB HOMOLOG"/>
    <property type="match status" value="1"/>
</dbReference>
<dbReference type="Pfam" id="PF07676">
    <property type="entry name" value="PD40"/>
    <property type="match status" value="4"/>
</dbReference>
<dbReference type="Pfam" id="PF04052">
    <property type="entry name" value="TolB_N"/>
    <property type="match status" value="1"/>
</dbReference>
<dbReference type="SUPFAM" id="SSF52964">
    <property type="entry name" value="TolB, N-terminal domain"/>
    <property type="match status" value="1"/>
</dbReference>
<dbReference type="SUPFAM" id="SSF69304">
    <property type="entry name" value="Tricorn protease N-terminal domain"/>
    <property type="match status" value="1"/>
</dbReference>
<reference key="1">
    <citation type="journal article" date="1995" name="Science">
        <title>Whole-genome random sequencing and assembly of Haemophilus influenzae Rd.</title>
        <authorList>
            <person name="Fleischmann R.D."/>
            <person name="Adams M.D."/>
            <person name="White O."/>
            <person name="Clayton R.A."/>
            <person name="Kirkness E.F."/>
            <person name="Kerlavage A.R."/>
            <person name="Bult C.J."/>
            <person name="Tomb J.-F."/>
            <person name="Dougherty B.A."/>
            <person name="Merrick J.M."/>
            <person name="McKenney K."/>
            <person name="Sutton G.G."/>
            <person name="FitzHugh W."/>
            <person name="Fields C.A."/>
            <person name="Gocayne J.D."/>
            <person name="Scott J.D."/>
            <person name="Shirley R."/>
            <person name="Liu L.-I."/>
            <person name="Glodek A."/>
            <person name="Kelley J.M."/>
            <person name="Weidman J.F."/>
            <person name="Phillips C.A."/>
            <person name="Spriggs T."/>
            <person name="Hedblom E."/>
            <person name="Cotton M.D."/>
            <person name="Utterback T.R."/>
            <person name="Hanna M.C."/>
            <person name="Nguyen D.T."/>
            <person name="Saudek D.M."/>
            <person name="Brandon R.C."/>
            <person name="Fine L.D."/>
            <person name="Fritchman J.L."/>
            <person name="Fuhrmann J.L."/>
            <person name="Geoghagen N.S.M."/>
            <person name="Gnehm C.L."/>
            <person name="McDonald L.A."/>
            <person name="Small K.V."/>
            <person name="Fraser C.M."/>
            <person name="Smith H.O."/>
            <person name="Venter J.C."/>
        </authorList>
    </citation>
    <scope>NUCLEOTIDE SEQUENCE [LARGE SCALE GENOMIC DNA]</scope>
    <source>
        <strain>ATCC 51907 / DSM 11121 / KW20 / Rd</strain>
    </source>
</reference>
<reference key="2">
    <citation type="journal article" date="1996" name="Gene">
        <title>Isolation and characterization of the Haemophilus influenzae tolQ, tolR, tolA and tolB genes.</title>
        <authorList>
            <person name="Sen K."/>
            <person name="Sikkema D.J."/>
            <person name="Murphy T.F."/>
        </authorList>
    </citation>
    <scope>NUCLEOTIDE SEQUENCE [GENOMIC DNA]</scope>
    <source>
        <strain>1479</strain>
    </source>
</reference>
<organism>
    <name type="scientific">Haemophilus influenzae (strain ATCC 51907 / DSM 11121 / KW20 / Rd)</name>
    <dbReference type="NCBI Taxonomy" id="71421"/>
    <lineage>
        <taxon>Bacteria</taxon>
        <taxon>Pseudomonadati</taxon>
        <taxon>Pseudomonadota</taxon>
        <taxon>Gammaproteobacteria</taxon>
        <taxon>Pasteurellales</taxon>
        <taxon>Pasteurellaceae</taxon>
        <taxon>Haemophilus</taxon>
    </lineage>
</organism>
<keyword id="KW-0131">Cell cycle</keyword>
<keyword id="KW-0132">Cell division</keyword>
<keyword id="KW-0574">Periplasm</keyword>
<keyword id="KW-1185">Reference proteome</keyword>
<keyword id="KW-0732">Signal</keyword>
<evidence type="ECO:0000255" key="1">
    <source>
        <dbReference type="HAMAP-Rule" id="MF_00671"/>
    </source>
</evidence>
<evidence type="ECO:0000305" key="2"/>